<organism>
    <name type="scientific">Pisum sativum</name>
    <name type="common">Garden pea</name>
    <name type="synonym">Lathyrus oleraceus</name>
    <dbReference type="NCBI Taxonomy" id="3888"/>
    <lineage>
        <taxon>Eukaryota</taxon>
        <taxon>Viridiplantae</taxon>
        <taxon>Streptophyta</taxon>
        <taxon>Embryophyta</taxon>
        <taxon>Tracheophyta</taxon>
        <taxon>Spermatophyta</taxon>
        <taxon>Magnoliopsida</taxon>
        <taxon>eudicotyledons</taxon>
        <taxon>Gunneridae</taxon>
        <taxon>Pentapetalae</taxon>
        <taxon>rosids</taxon>
        <taxon>fabids</taxon>
        <taxon>Fabales</taxon>
        <taxon>Fabaceae</taxon>
        <taxon>Papilionoideae</taxon>
        <taxon>50 kb inversion clade</taxon>
        <taxon>NPAAA clade</taxon>
        <taxon>Hologalegina</taxon>
        <taxon>IRL clade</taxon>
        <taxon>Fabeae</taxon>
        <taxon>Pisum</taxon>
    </lineage>
</organism>
<protein>
    <recommendedName>
        <fullName>Glycine dehydrogenase (decarboxylating), mitochondrial</fullName>
        <ecNumber>1.4.4.2</ecNumber>
    </recommendedName>
    <alternativeName>
        <fullName>Glycine cleavage system P protein</fullName>
    </alternativeName>
    <alternativeName>
        <fullName>Glycine decarboxylase</fullName>
    </alternativeName>
    <alternativeName>
        <fullName>Glycine dehydrogenase (aminomethyl-transferring)</fullName>
    </alternativeName>
</protein>
<reference key="1">
    <citation type="journal article" date="1992" name="J. Biol. Chem.">
        <title>Cloning and characterization of the P subunit of glycine decarboxylase from pea (Pisum sativum).</title>
        <authorList>
            <person name="Turner S.R."/>
            <person name="Irland R."/>
            <person name="Rawsthorne S."/>
        </authorList>
    </citation>
    <scope>NUCLEOTIDE SEQUENCE [MRNA]</scope>
    <scope>PROTEIN SEQUENCE OF 87-94</scope>
    <scope>TISSUE SPECIFICITY</scope>
    <scope>INDUCTION</scope>
    <source>
        <strain>cv. Birte</strain>
        <tissue>Leaf</tissue>
    </source>
</reference>
<reference key="2">
    <citation type="submission" date="1990-08" db="EMBL/GenBank/DDBJ databases">
        <authorList>
            <person name="Shah K.S."/>
            <person name="Kim Y."/>
            <person name="Oliver D.J."/>
        </authorList>
    </citation>
    <scope>NUCLEOTIDE SEQUENCE [MRNA] OF 905-1057</scope>
    <source>
        <strain>cv. Alaska</strain>
    </source>
</reference>
<dbReference type="EC" id="1.4.4.2"/>
<dbReference type="EMBL" id="X59773">
    <property type="protein sequence ID" value="CAA42443.1"/>
    <property type="molecule type" value="mRNA"/>
</dbReference>
<dbReference type="EMBL" id="X54377">
    <property type="protein sequence ID" value="CAA38252.1"/>
    <property type="molecule type" value="mRNA"/>
</dbReference>
<dbReference type="PIR" id="A42109">
    <property type="entry name" value="A42109"/>
</dbReference>
<dbReference type="SMR" id="P26969"/>
<dbReference type="IntAct" id="P26969">
    <property type="interactions" value="1"/>
</dbReference>
<dbReference type="OrthoDB" id="6537869at2759"/>
<dbReference type="BRENDA" id="1.4.1.27">
    <property type="organism ID" value="4872"/>
</dbReference>
<dbReference type="SABIO-RK" id="P26969"/>
<dbReference type="GO" id="GO:0048046">
    <property type="term" value="C:apoplast"/>
    <property type="evidence" value="ECO:0007669"/>
    <property type="project" value="TreeGrafter"/>
</dbReference>
<dbReference type="GO" id="GO:0009941">
    <property type="term" value="C:chloroplast envelope"/>
    <property type="evidence" value="ECO:0007669"/>
    <property type="project" value="TreeGrafter"/>
</dbReference>
<dbReference type="GO" id="GO:0005960">
    <property type="term" value="C:glycine cleavage complex"/>
    <property type="evidence" value="ECO:0000314"/>
    <property type="project" value="UniProtKB"/>
</dbReference>
<dbReference type="GO" id="GO:0005759">
    <property type="term" value="C:mitochondrial matrix"/>
    <property type="evidence" value="ECO:0000314"/>
    <property type="project" value="FlyBase"/>
</dbReference>
<dbReference type="GO" id="GO:0016594">
    <property type="term" value="F:glycine binding"/>
    <property type="evidence" value="ECO:0007669"/>
    <property type="project" value="TreeGrafter"/>
</dbReference>
<dbReference type="GO" id="GO:0004375">
    <property type="term" value="F:glycine dehydrogenase (decarboxylating) activity"/>
    <property type="evidence" value="ECO:0000314"/>
    <property type="project" value="FlyBase"/>
</dbReference>
<dbReference type="GO" id="GO:0030170">
    <property type="term" value="F:pyridoxal phosphate binding"/>
    <property type="evidence" value="ECO:0007669"/>
    <property type="project" value="TreeGrafter"/>
</dbReference>
<dbReference type="GO" id="GO:0019464">
    <property type="term" value="P:glycine decarboxylation via glycine cleavage system"/>
    <property type="evidence" value="ECO:0000314"/>
    <property type="project" value="FlyBase"/>
</dbReference>
<dbReference type="CDD" id="cd00613">
    <property type="entry name" value="GDC-P"/>
    <property type="match status" value="2"/>
</dbReference>
<dbReference type="FunFam" id="3.90.1150.10:FF:000025">
    <property type="entry name" value="Glycine cleavage system P protein"/>
    <property type="match status" value="1"/>
</dbReference>
<dbReference type="FunFam" id="3.40.640.10:FF:000005">
    <property type="entry name" value="Glycine dehydrogenase (decarboxylating), mitochondrial"/>
    <property type="match status" value="1"/>
</dbReference>
<dbReference type="FunFam" id="3.90.1150.10:FF:000007">
    <property type="entry name" value="Glycine dehydrogenase (decarboxylating), mitochondrial"/>
    <property type="match status" value="1"/>
</dbReference>
<dbReference type="FunFam" id="3.40.640.10:FF:000007">
    <property type="entry name" value="glycine dehydrogenase (Decarboxylating), mitochondrial"/>
    <property type="match status" value="1"/>
</dbReference>
<dbReference type="Gene3D" id="3.90.1150.10">
    <property type="entry name" value="Aspartate Aminotransferase, domain 1"/>
    <property type="match status" value="2"/>
</dbReference>
<dbReference type="Gene3D" id="3.40.640.10">
    <property type="entry name" value="Type I PLP-dependent aspartate aminotransferase-like (Major domain)"/>
    <property type="match status" value="2"/>
</dbReference>
<dbReference type="HAMAP" id="MF_00711">
    <property type="entry name" value="GcvP"/>
    <property type="match status" value="1"/>
</dbReference>
<dbReference type="InterPro" id="IPR003437">
    <property type="entry name" value="GcvP"/>
</dbReference>
<dbReference type="InterPro" id="IPR049316">
    <property type="entry name" value="GDC-P_C"/>
</dbReference>
<dbReference type="InterPro" id="IPR049315">
    <property type="entry name" value="GDC-P_N"/>
</dbReference>
<dbReference type="InterPro" id="IPR020581">
    <property type="entry name" value="GDC_P"/>
</dbReference>
<dbReference type="InterPro" id="IPR015424">
    <property type="entry name" value="PyrdxlP-dep_Trfase"/>
</dbReference>
<dbReference type="InterPro" id="IPR015421">
    <property type="entry name" value="PyrdxlP-dep_Trfase_major"/>
</dbReference>
<dbReference type="InterPro" id="IPR015422">
    <property type="entry name" value="PyrdxlP-dep_Trfase_small"/>
</dbReference>
<dbReference type="NCBIfam" id="TIGR00461">
    <property type="entry name" value="gcvP"/>
    <property type="match status" value="1"/>
</dbReference>
<dbReference type="NCBIfam" id="NF003346">
    <property type="entry name" value="PRK04366.1"/>
    <property type="match status" value="1"/>
</dbReference>
<dbReference type="PANTHER" id="PTHR11773:SF1">
    <property type="entry name" value="GLYCINE DEHYDROGENASE (DECARBOXYLATING), MITOCHONDRIAL"/>
    <property type="match status" value="1"/>
</dbReference>
<dbReference type="PANTHER" id="PTHR11773">
    <property type="entry name" value="GLYCINE DEHYDROGENASE, DECARBOXYLATING"/>
    <property type="match status" value="1"/>
</dbReference>
<dbReference type="Pfam" id="PF21478">
    <property type="entry name" value="GcvP2_C"/>
    <property type="match status" value="1"/>
</dbReference>
<dbReference type="Pfam" id="PF02347">
    <property type="entry name" value="GDC-P"/>
    <property type="match status" value="2"/>
</dbReference>
<dbReference type="SUPFAM" id="SSF53383">
    <property type="entry name" value="PLP-dependent transferases"/>
    <property type="match status" value="2"/>
</dbReference>
<name>GCSP_PEA</name>
<feature type="transit peptide" description="Mitochondrion" evidence="3">
    <location>
        <begin position="1"/>
        <end position="86"/>
    </location>
</feature>
<feature type="chain" id="PRO_0000010749" description="Glycine dehydrogenase (decarboxylating), mitochondrial">
    <location>
        <begin position="87"/>
        <end position="1057"/>
    </location>
</feature>
<feature type="region of interest" description="Disordered" evidence="2">
    <location>
        <begin position="18"/>
        <end position="47"/>
    </location>
</feature>
<feature type="compositionally biased region" description="Basic and acidic residues" evidence="2">
    <location>
        <begin position="18"/>
        <end position="27"/>
    </location>
</feature>
<feature type="compositionally biased region" description="Low complexity" evidence="2">
    <location>
        <begin position="28"/>
        <end position="47"/>
    </location>
</feature>
<feature type="modified residue" description="N6-(pyridoxal phosphate)lysine" evidence="1">
    <location>
        <position position="792"/>
    </location>
</feature>
<feature type="sequence conflict" description="In Ref. 2; CAA38252." evidence="4" ref="2">
    <original>I</original>
    <variation>Y</variation>
    <location>
        <position position="906"/>
    </location>
</feature>
<feature type="sequence conflict" description="In Ref. 2; CAA38252." evidence="4" ref="2">
    <original>P</original>
    <variation>A</variation>
    <location>
        <position position="919"/>
    </location>
</feature>
<evidence type="ECO:0000250" key="1"/>
<evidence type="ECO:0000256" key="2">
    <source>
        <dbReference type="SAM" id="MobiDB-lite"/>
    </source>
</evidence>
<evidence type="ECO:0000269" key="3">
    <source>
    </source>
</evidence>
<evidence type="ECO:0000305" key="4"/>
<proteinExistence type="evidence at protein level"/>
<sequence>MERARRLANRATLKRLLSEAKQNRKTESTSTTTTTPLPFSLSGSSSRYVSSVSNSILRGRGSKPDNNVSRRVGGFLGVGYPSQSRSISVEALKPSDTFPRRHNSATPDEQTKMAESVGFDTLDSLVDATVPKSIRLKEMKFNKFDGGLTEGQMIEHMKDLASKNKVFKSFIGMGYYNTHVPPVILRNIMENPAWYTQYTPYQAEISQGRLESLLNFQTMITDLTGLPMSNASLLDEGTAAAEAMSMCNNIQKGKKKTFIIASNCHPQTIDICQTRADGFELKVVVKDLKDIDYKSGDVCGVLVQYPGTEGEVLDYGEFIKKAHANEVKVVMASDLLALTVLKPPGEFGADIVVGSAQRFGVPMGYGGPHAAFLATSQEYKRMMPGRIIGVSVDSSGKQALRMAMQTREQHIRRDKATSNICTAQALLANMAAMYAVYHGPEGLKAIAQRVHGLAGVFALGLKKLGLEVQDLGFFDTVKVKTSNAKAIADAAIKSEINLRVVDGNTITAAFDETTTLEDVDKLFKVFAGGKPVSFTAASLAPEFQNAIPSGLVRESPYLTHPIFNTYQTEHELLRYIHRLQSKDLSLCHSMIPLGSCTMKLNATTEMMPVTWPSFTDLHPFAPTEQAQGYQEMFNNLGDLLCTITGFDSFSLQPNAGAAGEYAGLMVIRAYHLSRGDHHRNVCIIPASAHGTNPASAAMVGMKIVTIGTDAKGNINIEELKKAAEKHKDNLSAFMVTYPSTHGVYEEGIDDICKIIHDNGGQVYMDGANMNAQVGLTSPGWIGADVCHLNLHKTFCIPHGGGGPGMGPIGVKKHLAPFLPSHPVVPTGGIPAPENPQPLGSISAAPWGSALILPISYTYIAMMGSQGLTDASKIAILNANYMAKRLESYYPVLFRGVNGTVAHEFIIDLRGFKNTAGIEPEDVAKRLMDYGFHGPTMSWPVAGTLMIEPTESESKAELDRFCDALISIRKEIAEVEKGNADVHNNVLKGAPHPPSLLMADAWTKPYSREYAAFPAAWLRGAKFWPTTGRVDNVYGDRNLVCTLLPASQAVEEQAAATA</sequence>
<comment type="function">
    <text>The glycine cleavage system catalyzes the degradation of glycine. The P protein binds the alpha-amino group of glycine through its pyridoxal phosphate cofactor; CO(2) is released and the remaining methylamine moiety is then transferred to the lipoamide cofactor of the H protein.</text>
</comment>
<comment type="catalytic activity">
    <reaction>
        <text>N(6)-[(R)-lipoyl]-L-lysyl-[glycine-cleavage complex H protein] + glycine + H(+) = N(6)-[(R)-S(8)-aminomethyldihydrolipoyl]-L-lysyl-[glycine-cleavage complex H protein] + CO2</text>
        <dbReference type="Rhea" id="RHEA:24304"/>
        <dbReference type="Rhea" id="RHEA-COMP:10494"/>
        <dbReference type="Rhea" id="RHEA-COMP:10495"/>
        <dbReference type="ChEBI" id="CHEBI:15378"/>
        <dbReference type="ChEBI" id="CHEBI:16526"/>
        <dbReference type="ChEBI" id="CHEBI:57305"/>
        <dbReference type="ChEBI" id="CHEBI:83099"/>
        <dbReference type="ChEBI" id="CHEBI:83143"/>
        <dbReference type="EC" id="1.4.4.2"/>
    </reaction>
</comment>
<comment type="cofactor">
    <cofactor>
        <name>pyridoxal 5'-phosphate</name>
        <dbReference type="ChEBI" id="CHEBI:597326"/>
    </cofactor>
</comment>
<comment type="subunit">
    <text>Homodimer. The glycine cleavage system is composed of four proteins: P, T, L and H.</text>
</comment>
<comment type="subcellular location">
    <subcellularLocation>
        <location>Mitochondrion</location>
    </subcellularLocation>
</comment>
<comment type="tissue specificity">
    <text evidence="3">Highly expressed in leaves. Detected in roots and embryos.</text>
</comment>
<comment type="induction">
    <text evidence="3">Induced more than 4-fold after exposure to light for 6 hours.</text>
</comment>
<comment type="similarity">
    <text evidence="4">Belongs to the GcvP family.</text>
</comment>
<gene>
    <name type="primary">GDCSP</name>
    <name type="synonym">GDCP</name>
</gene>
<keyword id="KW-0903">Direct protein sequencing</keyword>
<keyword id="KW-0496">Mitochondrion</keyword>
<keyword id="KW-0560">Oxidoreductase</keyword>
<keyword id="KW-0663">Pyridoxal phosphate</keyword>
<keyword id="KW-0809">Transit peptide</keyword>
<accession>P26969</accession>